<accession>A4GZV0</accession>
<keyword id="KW-0053">Apoptosis</keyword>
<keyword id="KW-0496">Mitochondrion</keyword>
<keyword id="KW-1185">Reference proteome</keyword>
<keyword id="KW-0809">Transit peptide</keyword>
<name>DBLOH_XENLA</name>
<organism>
    <name type="scientific">Xenopus laevis</name>
    <name type="common">African clawed frog</name>
    <dbReference type="NCBI Taxonomy" id="8355"/>
    <lineage>
        <taxon>Eukaryota</taxon>
        <taxon>Metazoa</taxon>
        <taxon>Chordata</taxon>
        <taxon>Craniata</taxon>
        <taxon>Vertebrata</taxon>
        <taxon>Euteleostomi</taxon>
        <taxon>Amphibia</taxon>
        <taxon>Batrachia</taxon>
        <taxon>Anura</taxon>
        <taxon>Pipoidea</taxon>
        <taxon>Pipidae</taxon>
        <taxon>Xenopodinae</taxon>
        <taxon>Xenopus</taxon>
        <taxon>Xenopus</taxon>
    </lineage>
</organism>
<proteinExistence type="evidence at transcript level"/>
<gene>
    <name type="primary">diablo</name>
    <name evidence="8" type="synonym">smac</name>
</gene>
<reference evidence="8" key="1">
    <citation type="journal article" date="2007" name="Gene">
        <title>Cloning and characterization of Xenopus laevis Smac/DIABLO.</title>
        <authorList>
            <person name="Montesanti A."/>
            <person name="Deignan K."/>
            <person name="Hensey C."/>
        </authorList>
    </citation>
    <scope>NUCLEOTIDE SEQUENCE [MRNA]</scope>
    <scope>FUNCTION</scope>
    <scope>DEVELOPMENTAL STAGE</scope>
</reference>
<protein>
    <recommendedName>
        <fullName evidence="2 6">Diablo homolog, mitochondrial</fullName>
    </recommendedName>
    <alternativeName>
        <fullName evidence="2">Direct IAP-binding protein with low pI</fullName>
    </alternativeName>
    <alternativeName>
        <fullName evidence="2">Second mitochondria-derived activator of caspase</fullName>
        <shortName evidence="8">Smac protein</shortName>
        <shortName evidence="6">XSmac</shortName>
    </alternativeName>
</protein>
<feature type="transit peptide" description="Mitochondrion" evidence="3">
    <location>
        <begin position="1"/>
        <end position="57"/>
    </location>
</feature>
<feature type="chain" id="PRO_0000379493" description="Diablo homolog, mitochondrial" evidence="3">
    <location>
        <begin position="58"/>
        <end position="244"/>
    </location>
</feature>
<feature type="region of interest" description="Disordered" evidence="4">
    <location>
        <begin position="208"/>
        <end position="244"/>
    </location>
</feature>
<feature type="short sequence motif" description="IAP-binding" evidence="3">
    <location>
        <begin position="50"/>
        <end position="54"/>
    </location>
</feature>
<feature type="compositionally biased region" description="Basic and acidic residues" evidence="4">
    <location>
        <begin position="208"/>
        <end position="218"/>
    </location>
</feature>
<comment type="function">
    <text evidence="1 5">Acts by opposing the inhibitory activity of inhibitor of apoptosis proteins (IAP) (By similarity). Promotes apoptosis.</text>
</comment>
<comment type="subunit">
    <text evidence="2">Homodimer.</text>
</comment>
<comment type="subcellular location">
    <subcellularLocation>
        <location evidence="2">Mitochondrion</location>
    </subcellularLocation>
    <text evidence="2">Released into the cytosol when cells undergo apoptosis.</text>
</comment>
<comment type="developmental stage">
    <text evidence="5">Expressed both maternally and zygotically. Expressed throughout embryonic development.</text>
</comment>
<comment type="similarity">
    <text evidence="7">Belongs to the Smac/DIABLO protein family.</text>
</comment>
<dbReference type="EMBL" id="AM050817">
    <property type="protein sequence ID" value="CAJ19268.1"/>
    <property type="molecule type" value="mRNA"/>
</dbReference>
<dbReference type="RefSeq" id="NP_001091439.1">
    <property type="nucleotide sequence ID" value="NM_001097970.1"/>
</dbReference>
<dbReference type="SMR" id="A4GZV0"/>
<dbReference type="GeneID" id="100049147"/>
<dbReference type="KEGG" id="xla:100049147"/>
<dbReference type="AGR" id="Xenbase:XB-GENE-5915587"/>
<dbReference type="CTD" id="100049147"/>
<dbReference type="Xenbase" id="XB-GENE-5915587">
    <property type="gene designation" value="diablo.L"/>
</dbReference>
<dbReference type="OrthoDB" id="6153032at2759"/>
<dbReference type="Proteomes" id="UP000186698">
    <property type="component" value="Chromosome 1L"/>
</dbReference>
<dbReference type="Bgee" id="100049147">
    <property type="expression patterns" value="Expressed in muscle tissue and 19 other cell types or tissues"/>
</dbReference>
<dbReference type="GO" id="GO:0005737">
    <property type="term" value="C:cytoplasm"/>
    <property type="evidence" value="ECO:0000250"/>
    <property type="project" value="UniProtKB"/>
</dbReference>
<dbReference type="GO" id="GO:0005739">
    <property type="term" value="C:mitochondrion"/>
    <property type="evidence" value="ECO:0000250"/>
    <property type="project" value="UniProtKB"/>
</dbReference>
<dbReference type="GO" id="GO:0008631">
    <property type="term" value="P:intrinsic apoptotic signaling pathway in response to oxidative stress"/>
    <property type="evidence" value="ECO:0000318"/>
    <property type="project" value="GO_Central"/>
</dbReference>
<dbReference type="GO" id="GO:0051402">
    <property type="term" value="P:neuron apoptotic process"/>
    <property type="evidence" value="ECO:0000318"/>
    <property type="project" value="GO_Central"/>
</dbReference>
<dbReference type="GO" id="GO:0043065">
    <property type="term" value="P:positive regulation of apoptotic process"/>
    <property type="evidence" value="ECO:0000315"/>
    <property type="project" value="UniProtKB"/>
</dbReference>
<dbReference type="FunFam" id="1.20.58.70:FF:000012">
    <property type="entry name" value="diablo homolog, mitochondrial isoform X1"/>
    <property type="match status" value="1"/>
</dbReference>
<dbReference type="Gene3D" id="1.20.58.70">
    <property type="match status" value="1"/>
</dbReference>
<dbReference type="InterPro" id="IPR009062">
    <property type="entry name" value="Smac/DIABLO-like_sf"/>
</dbReference>
<dbReference type="InterPro" id="IPR015142">
    <property type="entry name" value="Smac_DIABLO"/>
</dbReference>
<dbReference type="PANTHER" id="PTHR32247">
    <property type="entry name" value="DIABLO HOMOLOG, MITOCHONDRIAL"/>
    <property type="match status" value="1"/>
</dbReference>
<dbReference type="PANTHER" id="PTHR32247:SF3">
    <property type="entry name" value="DIABLO IAP-BINDING MITOCHONDRIAL PROTEIN"/>
    <property type="match status" value="1"/>
</dbReference>
<dbReference type="Pfam" id="PF09057">
    <property type="entry name" value="Smac_DIABLO"/>
    <property type="match status" value="1"/>
</dbReference>
<dbReference type="SUPFAM" id="SSF46984">
    <property type="entry name" value="Smac/diablo"/>
    <property type="match status" value="1"/>
</dbReference>
<sequence length="244" mass="26969">MASLPRRLLWSVSYIVRESFPIVSKRNCVSLLQGSWRKVLSVGVGTSLCAIPVGQRSEPTLSSESLIKRAASLVADSSSTFLSQTTYALVESLTEYTTAVYTLISLQQKYSSLLDKINSNEESAIWQVIIGARVQINQLKEQYMKYESSWQRAVSLSEMAAEAAYQSGADQASMTVRNHIQIVQTQVQGARDQAHMAEVQLAASQTEEIKRTITEDKGNPPSGGSPRNSLSEEEDIPEAYLRED</sequence>
<evidence type="ECO:0000250" key="1"/>
<evidence type="ECO:0000250" key="2">
    <source>
        <dbReference type="UniProtKB" id="Q9NR28"/>
    </source>
</evidence>
<evidence type="ECO:0000255" key="3"/>
<evidence type="ECO:0000256" key="4">
    <source>
        <dbReference type="SAM" id="MobiDB-lite"/>
    </source>
</evidence>
<evidence type="ECO:0000269" key="5">
    <source>
    </source>
</evidence>
<evidence type="ECO:0000303" key="6">
    <source>
    </source>
</evidence>
<evidence type="ECO:0000305" key="7"/>
<evidence type="ECO:0000312" key="8">
    <source>
        <dbReference type="EMBL" id="CAJ19268.1"/>
    </source>
</evidence>